<organism>
    <name type="scientific">Mycobacterium tuberculosis (strain CDC 1551 / Oshkosh)</name>
    <dbReference type="NCBI Taxonomy" id="83331"/>
    <lineage>
        <taxon>Bacteria</taxon>
        <taxon>Bacillati</taxon>
        <taxon>Actinomycetota</taxon>
        <taxon>Actinomycetes</taxon>
        <taxon>Mycobacteriales</taxon>
        <taxon>Mycobacteriaceae</taxon>
        <taxon>Mycobacterium</taxon>
        <taxon>Mycobacterium tuberculosis complex</taxon>
    </lineage>
</organism>
<proteinExistence type="inferred from homology"/>
<protein>
    <recommendedName>
        <fullName>Nicotinate-nucleotide pyrophosphorylase [carboxylating]</fullName>
        <ecNumber>2.4.2.19</ecNumber>
    </recommendedName>
    <alternativeName>
        <fullName>Quinolinate phosphoribosyltransferase [decarboxylating]</fullName>
        <shortName>QAPRTase</shortName>
    </alternativeName>
</protein>
<keyword id="KW-0328">Glycosyltransferase</keyword>
<keyword id="KW-0662">Pyridine nucleotide biosynthesis</keyword>
<keyword id="KW-1185">Reference proteome</keyword>
<keyword id="KW-0808">Transferase</keyword>
<accession>P9WJJ6</accession>
<accession>L0T8R5</accession>
<accession>O06594</accession>
<comment type="function">
    <text evidence="1">Involved in the catabolism of quinolinic acid (QA).</text>
</comment>
<comment type="catalytic activity">
    <reaction>
        <text>nicotinate beta-D-ribonucleotide + CO2 + diphosphate = quinolinate + 5-phospho-alpha-D-ribose 1-diphosphate + 2 H(+)</text>
        <dbReference type="Rhea" id="RHEA:12733"/>
        <dbReference type="ChEBI" id="CHEBI:15378"/>
        <dbReference type="ChEBI" id="CHEBI:16526"/>
        <dbReference type="ChEBI" id="CHEBI:29959"/>
        <dbReference type="ChEBI" id="CHEBI:33019"/>
        <dbReference type="ChEBI" id="CHEBI:57502"/>
        <dbReference type="ChEBI" id="CHEBI:58017"/>
        <dbReference type="EC" id="2.4.2.19"/>
    </reaction>
</comment>
<comment type="pathway">
    <text>Cofactor biosynthesis; NAD(+) biosynthesis; nicotinate D-ribonucleotide from quinolinate: step 1/1.</text>
</comment>
<comment type="subunit">
    <text evidence="1">Homodimer. Hexamer formed by 3 homodimers (By similarity).</text>
</comment>
<comment type="similarity">
    <text evidence="2">Belongs to the NadC/ModD family.</text>
</comment>
<comment type="sequence caution" evidence="2">
    <conflict type="erroneous initiation">
        <sequence resource="EMBL-CDS" id="AAK45900"/>
    </conflict>
</comment>
<reference key="1">
    <citation type="journal article" date="2002" name="J. Bacteriol.">
        <title>Whole-genome comparison of Mycobacterium tuberculosis clinical and laboratory strains.</title>
        <authorList>
            <person name="Fleischmann R.D."/>
            <person name="Alland D."/>
            <person name="Eisen J.A."/>
            <person name="Carpenter L."/>
            <person name="White O."/>
            <person name="Peterson J.D."/>
            <person name="DeBoy R.T."/>
            <person name="Dodson R.J."/>
            <person name="Gwinn M.L."/>
            <person name="Haft D.H."/>
            <person name="Hickey E.K."/>
            <person name="Kolonay J.F."/>
            <person name="Nelson W.C."/>
            <person name="Umayam L.A."/>
            <person name="Ermolaeva M.D."/>
            <person name="Salzberg S.L."/>
            <person name="Delcher A."/>
            <person name="Utterback T.R."/>
            <person name="Weidman J.F."/>
            <person name="Khouri H.M."/>
            <person name="Gill J."/>
            <person name="Mikula A."/>
            <person name="Bishai W."/>
            <person name="Jacobs W.R. Jr."/>
            <person name="Venter J.C."/>
            <person name="Fraser C.M."/>
        </authorList>
    </citation>
    <scope>NUCLEOTIDE SEQUENCE [LARGE SCALE GENOMIC DNA]</scope>
    <source>
        <strain>CDC 1551 / Oshkosh</strain>
    </source>
</reference>
<sequence>MGLSDWELAAARAAIARGLDEDLRYGPDVTTLATVPASATTTASLVTREAGVVAGLDVALLTLNEVLGTNGYRVLDRVEDGARVPPGEALMTLEAQTRGLLTAERTMLNLVGHLSGIATATAAWVDAVRGTKAKIRDTRKTLPGLRALQKYAVRTGGGVNHRLGLGDAALIKDNHVAAAGSVVDALRAVRNAAPDLPCEVEVDSLEQLDAVLPEKPELILLDNFAVWQTQTAVQRRDSRAPTVMLESSGGLSLQTAATYAETGVDYLAVGALTHSVRVLDIGLDM</sequence>
<evidence type="ECO:0000250" key="1"/>
<evidence type="ECO:0000305" key="2"/>
<name>NADC_MYCTO</name>
<dbReference type="EC" id="2.4.2.19"/>
<dbReference type="EMBL" id="AE000516">
    <property type="protein sequence ID" value="AAK45900.1"/>
    <property type="status" value="ALT_INIT"/>
    <property type="molecule type" value="Genomic_DNA"/>
</dbReference>
<dbReference type="PIR" id="F70543">
    <property type="entry name" value="F70543"/>
</dbReference>
<dbReference type="RefSeq" id="WP_003898939.1">
    <property type="nucleotide sequence ID" value="NZ_KK341227.1"/>
</dbReference>
<dbReference type="SMR" id="P9WJJ6"/>
<dbReference type="KEGG" id="mtc:MT1632"/>
<dbReference type="PATRIC" id="fig|83331.31.peg.1754"/>
<dbReference type="HOGENOM" id="CLU_039622_0_0_11"/>
<dbReference type="UniPathway" id="UPA00253">
    <property type="reaction ID" value="UER00331"/>
</dbReference>
<dbReference type="Proteomes" id="UP000001020">
    <property type="component" value="Chromosome"/>
</dbReference>
<dbReference type="GO" id="GO:0005737">
    <property type="term" value="C:cytoplasm"/>
    <property type="evidence" value="ECO:0007669"/>
    <property type="project" value="TreeGrafter"/>
</dbReference>
<dbReference type="GO" id="GO:0004514">
    <property type="term" value="F:nicotinate-nucleotide diphosphorylase (carboxylating) activity"/>
    <property type="evidence" value="ECO:0007669"/>
    <property type="project" value="UniProtKB-EC"/>
</dbReference>
<dbReference type="GO" id="GO:0009435">
    <property type="term" value="P:NAD biosynthetic process"/>
    <property type="evidence" value="ECO:0007669"/>
    <property type="project" value="UniProtKB-UniPathway"/>
</dbReference>
<dbReference type="GO" id="GO:0034213">
    <property type="term" value="P:quinolinate catabolic process"/>
    <property type="evidence" value="ECO:0007669"/>
    <property type="project" value="TreeGrafter"/>
</dbReference>
<dbReference type="CDD" id="cd01572">
    <property type="entry name" value="QPRTase"/>
    <property type="match status" value="1"/>
</dbReference>
<dbReference type="FunFam" id="3.20.20.70:FF:000030">
    <property type="entry name" value="Nicotinate-nucleotide pyrophosphorylase, carboxylating"/>
    <property type="match status" value="1"/>
</dbReference>
<dbReference type="Gene3D" id="3.20.20.70">
    <property type="entry name" value="Aldolase class I"/>
    <property type="match status" value="1"/>
</dbReference>
<dbReference type="Gene3D" id="3.90.1170.20">
    <property type="entry name" value="Quinolinate phosphoribosyl transferase, N-terminal domain"/>
    <property type="match status" value="1"/>
</dbReference>
<dbReference type="InterPro" id="IPR013785">
    <property type="entry name" value="Aldolase_TIM"/>
</dbReference>
<dbReference type="InterPro" id="IPR004393">
    <property type="entry name" value="NadC"/>
</dbReference>
<dbReference type="InterPro" id="IPR027277">
    <property type="entry name" value="NadC/ModD"/>
</dbReference>
<dbReference type="InterPro" id="IPR036068">
    <property type="entry name" value="Nicotinate_pribotase-like_C"/>
</dbReference>
<dbReference type="InterPro" id="IPR037128">
    <property type="entry name" value="Quinolinate_PRibosylTase_N_sf"/>
</dbReference>
<dbReference type="InterPro" id="IPR002638">
    <property type="entry name" value="Quinolinate_PRibosylTrfase_C"/>
</dbReference>
<dbReference type="InterPro" id="IPR022412">
    <property type="entry name" value="Quinolinate_PRibosylTrfase_N"/>
</dbReference>
<dbReference type="NCBIfam" id="TIGR00078">
    <property type="entry name" value="nadC"/>
    <property type="match status" value="1"/>
</dbReference>
<dbReference type="PANTHER" id="PTHR32179">
    <property type="entry name" value="NICOTINATE-NUCLEOTIDE PYROPHOSPHORYLASE [CARBOXYLATING]"/>
    <property type="match status" value="1"/>
</dbReference>
<dbReference type="PANTHER" id="PTHR32179:SF3">
    <property type="entry name" value="NICOTINATE-NUCLEOTIDE PYROPHOSPHORYLASE [CARBOXYLATING]"/>
    <property type="match status" value="1"/>
</dbReference>
<dbReference type="Pfam" id="PF01729">
    <property type="entry name" value="QRPTase_C"/>
    <property type="match status" value="1"/>
</dbReference>
<dbReference type="Pfam" id="PF02749">
    <property type="entry name" value="QRPTase_N"/>
    <property type="match status" value="1"/>
</dbReference>
<dbReference type="PIRSF" id="PIRSF006250">
    <property type="entry name" value="NadC_ModD"/>
    <property type="match status" value="1"/>
</dbReference>
<dbReference type="SUPFAM" id="SSF51690">
    <property type="entry name" value="Nicotinate/Quinolinate PRTase C-terminal domain-like"/>
    <property type="match status" value="1"/>
</dbReference>
<dbReference type="SUPFAM" id="SSF54675">
    <property type="entry name" value="Nicotinate/Quinolinate PRTase N-terminal domain-like"/>
    <property type="match status" value="1"/>
</dbReference>
<gene>
    <name type="primary">nadC</name>
    <name type="ordered locus">MT1632</name>
</gene>
<feature type="chain" id="PRO_0000427818" description="Nicotinate-nucleotide pyrophosphorylase [carboxylating]">
    <location>
        <begin position="1"/>
        <end position="285"/>
    </location>
</feature>
<feature type="binding site" evidence="1">
    <location>
        <position position="105"/>
    </location>
    <ligand>
        <name>substrate</name>
    </ligand>
</feature>
<feature type="binding site" evidence="1">
    <location>
        <begin position="138"/>
        <end position="140"/>
    </location>
    <ligand>
        <name>substrate</name>
    </ligand>
</feature>
<feature type="binding site" evidence="1">
    <location>
        <position position="162"/>
    </location>
    <ligand>
        <name>substrate</name>
    </ligand>
</feature>
<feature type="binding site" evidence="1">
    <location>
        <position position="172"/>
    </location>
    <ligand>
        <name>substrate</name>
    </ligand>
</feature>
<feature type="binding site" evidence="1">
    <location>
        <position position="201"/>
    </location>
    <ligand>
        <name>substrate</name>
    </ligand>
</feature>
<feature type="binding site" evidence="1">
    <location>
        <position position="222"/>
    </location>
    <ligand>
        <name>substrate</name>
    </ligand>
</feature>
<feature type="binding site" evidence="1">
    <location>
        <begin position="248"/>
        <end position="250"/>
    </location>
    <ligand>
        <name>substrate</name>
    </ligand>
</feature>
<feature type="binding site" evidence="1">
    <location>
        <begin position="269"/>
        <end position="271"/>
    </location>
    <ligand>
        <name>substrate</name>
    </ligand>
</feature>